<gene>
    <name type="primary">ATG18</name>
    <name type="ordered locus">DEHA2G09438g</name>
</gene>
<proteinExistence type="inferred from homology"/>
<organism>
    <name type="scientific">Debaryomyces hansenii (strain ATCC 36239 / CBS 767 / BCRC 21394 / JCM 1990 / NBRC 0083 / IGC 2968)</name>
    <name type="common">Yeast</name>
    <name type="synonym">Torulaspora hansenii</name>
    <dbReference type="NCBI Taxonomy" id="284592"/>
    <lineage>
        <taxon>Eukaryota</taxon>
        <taxon>Fungi</taxon>
        <taxon>Dikarya</taxon>
        <taxon>Ascomycota</taxon>
        <taxon>Saccharomycotina</taxon>
        <taxon>Pichiomycetes</taxon>
        <taxon>Debaryomycetaceae</taxon>
        <taxon>Debaryomyces</taxon>
    </lineage>
</organism>
<protein>
    <recommendedName>
        <fullName>Autophagy-related protein 18</fullName>
    </recommendedName>
</protein>
<evidence type="ECO:0000250" key="1"/>
<evidence type="ECO:0000250" key="2">
    <source>
        <dbReference type="UniProtKB" id="P43601"/>
    </source>
</evidence>
<evidence type="ECO:0000256" key="3">
    <source>
        <dbReference type="SAM" id="MobiDB-lite"/>
    </source>
</evidence>
<evidence type="ECO:0000305" key="4"/>
<accession>Q6BIL4</accession>
<name>ATG18_DEBHA</name>
<sequence>MLKNQSNSVHVDGSHNNSSNYNDEVSSIAKSIRNADESVNFITFNQDASCIALGLKNGYKIFNCKPNFGKCYQFKKNESIGKIEMLYCTSLIAIVGLGEEVGSSPRKLKIINTRRQSTICELIFPSTILQVKLSKSRMIILLEEQIYIYDVTTMKLLHTIETSPNGNGLCTLSADNCDGKNNSYLAYPSPPKTITHDSLLVNGINTNGGMNSIQNNIQSVSNSPNRIGDVIIFNTTTLQPLSVIEAHKSALAAITLSTDGTLLATASDKGTIVRVFSVATGLKLYQFRRGTYPTKIFTLSFSFDNKYVLATSSSGTVHIFRLGEEESLENKHKRKRNSKKLKLNPEYETITEENENEIQKDDAEDDDIIQDDGDDSDADDDDDESLEVIPSKHRKLSQDSNNSFTSFNSAFSNDDNKDNKSEPLIDQTRLSVARLIRRSSQTLGRKAAQKMGDFLPTRFSSILEPTRNFASLKINSVSKDIKSIAIINNEVQEDLVPQAYLNAKENNPSPPKDISVNTAKDLLPLNLLHINVVTSEGYFYTYGLDPDRGGDCILLHQYFLLD</sequence>
<feature type="chain" id="PRO_0000050865" description="Autophagy-related protein 18">
    <location>
        <begin position="1"/>
        <end position="562"/>
    </location>
</feature>
<feature type="repeat" description="WD 1">
    <location>
        <begin position="246"/>
        <end position="286"/>
    </location>
</feature>
<feature type="repeat" description="WD 2">
    <location>
        <begin position="291"/>
        <end position="330"/>
    </location>
</feature>
<feature type="region of interest" description="Disordered" evidence="3">
    <location>
        <begin position="1"/>
        <end position="22"/>
    </location>
</feature>
<feature type="region of interest" description="Disordered" evidence="3">
    <location>
        <begin position="327"/>
        <end position="425"/>
    </location>
</feature>
<feature type="short sequence motif" description="L/FRRG motif" evidence="2">
    <location>
        <begin position="287"/>
        <end position="291"/>
    </location>
</feature>
<feature type="compositionally biased region" description="Basic residues" evidence="3">
    <location>
        <begin position="331"/>
        <end position="342"/>
    </location>
</feature>
<feature type="compositionally biased region" description="Acidic residues" evidence="3">
    <location>
        <begin position="349"/>
        <end position="386"/>
    </location>
</feature>
<feature type="compositionally biased region" description="Low complexity" evidence="3">
    <location>
        <begin position="399"/>
        <end position="413"/>
    </location>
</feature>
<feature type="compositionally biased region" description="Basic and acidic residues" evidence="3">
    <location>
        <begin position="414"/>
        <end position="423"/>
    </location>
</feature>
<keyword id="KW-0072">Autophagy</keyword>
<keyword id="KW-0967">Endosome</keyword>
<keyword id="KW-0472">Membrane</keyword>
<keyword id="KW-0653">Protein transport</keyword>
<keyword id="KW-1185">Reference proteome</keyword>
<keyword id="KW-0677">Repeat</keyword>
<keyword id="KW-0813">Transport</keyword>
<keyword id="KW-0926">Vacuole</keyword>
<keyword id="KW-0853">WD repeat</keyword>
<reference key="1">
    <citation type="journal article" date="2004" name="Nature">
        <title>Genome evolution in yeasts.</title>
        <authorList>
            <person name="Dujon B."/>
            <person name="Sherman D."/>
            <person name="Fischer G."/>
            <person name="Durrens P."/>
            <person name="Casaregola S."/>
            <person name="Lafontaine I."/>
            <person name="de Montigny J."/>
            <person name="Marck C."/>
            <person name="Neuveglise C."/>
            <person name="Talla E."/>
            <person name="Goffard N."/>
            <person name="Frangeul L."/>
            <person name="Aigle M."/>
            <person name="Anthouard V."/>
            <person name="Babour A."/>
            <person name="Barbe V."/>
            <person name="Barnay S."/>
            <person name="Blanchin S."/>
            <person name="Beckerich J.-M."/>
            <person name="Beyne E."/>
            <person name="Bleykasten C."/>
            <person name="Boisrame A."/>
            <person name="Boyer J."/>
            <person name="Cattolico L."/>
            <person name="Confanioleri F."/>
            <person name="de Daruvar A."/>
            <person name="Despons L."/>
            <person name="Fabre E."/>
            <person name="Fairhead C."/>
            <person name="Ferry-Dumazet H."/>
            <person name="Groppi A."/>
            <person name="Hantraye F."/>
            <person name="Hennequin C."/>
            <person name="Jauniaux N."/>
            <person name="Joyet P."/>
            <person name="Kachouri R."/>
            <person name="Kerrest A."/>
            <person name="Koszul R."/>
            <person name="Lemaire M."/>
            <person name="Lesur I."/>
            <person name="Ma L."/>
            <person name="Muller H."/>
            <person name="Nicaud J.-M."/>
            <person name="Nikolski M."/>
            <person name="Oztas S."/>
            <person name="Ozier-Kalogeropoulos O."/>
            <person name="Pellenz S."/>
            <person name="Potier S."/>
            <person name="Richard G.-F."/>
            <person name="Straub M.-L."/>
            <person name="Suleau A."/>
            <person name="Swennen D."/>
            <person name="Tekaia F."/>
            <person name="Wesolowski-Louvel M."/>
            <person name="Westhof E."/>
            <person name="Wirth B."/>
            <person name="Zeniou-Meyer M."/>
            <person name="Zivanovic Y."/>
            <person name="Bolotin-Fukuhara M."/>
            <person name="Thierry A."/>
            <person name="Bouchier C."/>
            <person name="Caudron B."/>
            <person name="Scarpelli C."/>
            <person name="Gaillardin C."/>
            <person name="Weissenbach J."/>
            <person name="Wincker P."/>
            <person name="Souciet J.-L."/>
        </authorList>
    </citation>
    <scope>NUCLEOTIDE SEQUENCE [LARGE SCALE GENOMIC DNA]</scope>
    <source>
        <strain>ATCC 36239 / CBS 767 / BCRC 21394 / JCM 1990 / NBRC 0083 / IGC 2968</strain>
    </source>
</reference>
<comment type="function">
    <text evidence="1">The PI(3,5)P2 regulatory complex regulates both the synthesis and turnover of phosphatidylinositol 3,5-bisphosphate (PtdIns(3,5)P2). Necessary for proper vacuole morphology. Plays an important role in osmotically-induced vacuole fragmentation. Required for cytoplasm to vacuole transport (Cvt) vesicle formation, pexophagy and starvation-induced autophagy. Involved in correct ATG9 trafficking to the pre-autophagosomal structure. Might also be involved in premeiotic DNA replication (By similarity).</text>
</comment>
<comment type="subunit">
    <text evidence="1">Component of the PI(3,5)P2 regulatory complex.</text>
</comment>
<comment type="subcellular location">
    <subcellularLocation>
        <location evidence="1">Preautophagosomal structure membrane</location>
        <topology evidence="1">Peripheral membrane protein</topology>
    </subcellularLocation>
    <subcellularLocation>
        <location evidence="1">Vacuole membrane</location>
        <topology evidence="1">Peripheral membrane protein</topology>
    </subcellularLocation>
    <subcellularLocation>
        <location evidence="1">Endosome membrane</location>
        <topology evidence="1">Peripheral membrane protein</topology>
    </subcellularLocation>
</comment>
<comment type="domain">
    <text evidence="1">The N-terminus might form a beta-propeller domain involved in specific binding to phosphatidylinositol 3,5-bisphosphate (PIP2), leading to the association of the protein to the membrane.</text>
</comment>
<comment type="domain">
    <text evidence="2">The L/FRRG motif is essential for the cytoplasm to vacuole transport (Cvt) pathway, for the recruitment of ATG8 and ATG16 to the PAS in nutrient-rich medium, and for its recruitment to and dissociation from the PAS under starvation conditions.</text>
</comment>
<comment type="similarity">
    <text evidence="4">Belongs to the WD repeat PROPPIN family.</text>
</comment>
<dbReference type="EMBL" id="CR382139">
    <property type="protein sequence ID" value="CAG90425.1"/>
    <property type="molecule type" value="Genomic_DNA"/>
</dbReference>
<dbReference type="RefSeq" id="XP_461957.1">
    <property type="nucleotide sequence ID" value="XM_461957.1"/>
</dbReference>
<dbReference type="SMR" id="Q6BIL4"/>
<dbReference type="FunCoup" id="Q6BIL4">
    <property type="interactions" value="580"/>
</dbReference>
<dbReference type="STRING" id="284592.Q6BIL4"/>
<dbReference type="GeneID" id="2904846"/>
<dbReference type="KEGG" id="dha:DEHA2G09438g"/>
<dbReference type="VEuPathDB" id="FungiDB:DEHA2G09438g"/>
<dbReference type="eggNOG" id="KOG2110">
    <property type="taxonomic scope" value="Eukaryota"/>
</dbReference>
<dbReference type="HOGENOM" id="CLU_025895_5_2_1"/>
<dbReference type="InParanoid" id="Q6BIL4"/>
<dbReference type="OMA" id="KTMGRMI"/>
<dbReference type="OrthoDB" id="1667587at2759"/>
<dbReference type="Proteomes" id="UP000000599">
    <property type="component" value="Chromosome G"/>
</dbReference>
<dbReference type="GO" id="GO:0005829">
    <property type="term" value="C:cytosol"/>
    <property type="evidence" value="ECO:0007669"/>
    <property type="project" value="EnsemblFungi"/>
</dbReference>
<dbReference type="GO" id="GO:0010008">
    <property type="term" value="C:endosome membrane"/>
    <property type="evidence" value="ECO:0007669"/>
    <property type="project" value="UniProtKB-SubCell"/>
</dbReference>
<dbReference type="GO" id="GO:0000329">
    <property type="term" value="C:fungal-type vacuole membrane"/>
    <property type="evidence" value="ECO:0007669"/>
    <property type="project" value="EnsemblFungi"/>
</dbReference>
<dbReference type="GO" id="GO:0070772">
    <property type="term" value="C:PAS complex"/>
    <property type="evidence" value="ECO:0007669"/>
    <property type="project" value="EnsemblFungi"/>
</dbReference>
<dbReference type="GO" id="GO:0061908">
    <property type="term" value="C:phagophore"/>
    <property type="evidence" value="ECO:0007669"/>
    <property type="project" value="EnsemblFungi"/>
</dbReference>
<dbReference type="GO" id="GO:0034045">
    <property type="term" value="C:phagophore assembly site membrane"/>
    <property type="evidence" value="ECO:0007669"/>
    <property type="project" value="UniProtKB-SubCell"/>
</dbReference>
<dbReference type="GO" id="GO:0080025">
    <property type="term" value="F:phosphatidylinositol-3,5-bisphosphate binding"/>
    <property type="evidence" value="ECO:0007669"/>
    <property type="project" value="EnsemblFungi"/>
</dbReference>
<dbReference type="GO" id="GO:0032266">
    <property type="term" value="F:phosphatidylinositol-3-phosphate binding"/>
    <property type="evidence" value="ECO:0007669"/>
    <property type="project" value="EnsemblFungi"/>
</dbReference>
<dbReference type="GO" id="GO:0070273">
    <property type="term" value="F:phosphatidylinositol-4-phosphate binding"/>
    <property type="evidence" value="ECO:0007669"/>
    <property type="project" value="EnsemblFungi"/>
</dbReference>
<dbReference type="GO" id="GO:0043130">
    <property type="term" value="F:ubiquitin binding"/>
    <property type="evidence" value="ECO:0007669"/>
    <property type="project" value="EnsemblFungi"/>
</dbReference>
<dbReference type="GO" id="GO:0032258">
    <property type="term" value="P:cytoplasm to vacuole targeting by the Cvt pathway"/>
    <property type="evidence" value="ECO:0007669"/>
    <property type="project" value="EnsemblFungi"/>
</dbReference>
<dbReference type="GO" id="GO:0045324">
    <property type="term" value="P:late endosome to vacuole transport"/>
    <property type="evidence" value="ECO:0007669"/>
    <property type="project" value="EnsemblFungi"/>
</dbReference>
<dbReference type="GO" id="GO:0000425">
    <property type="term" value="P:pexophagy"/>
    <property type="evidence" value="ECO:0007669"/>
    <property type="project" value="EnsemblFungi"/>
</dbReference>
<dbReference type="GO" id="GO:0034727">
    <property type="term" value="P:piecemeal microautophagy of the nucleus"/>
    <property type="evidence" value="ECO:0007669"/>
    <property type="project" value="EnsemblFungi"/>
</dbReference>
<dbReference type="GO" id="GO:0044090">
    <property type="term" value="P:positive regulation of vacuole organization"/>
    <property type="evidence" value="ECO:0007669"/>
    <property type="project" value="EnsemblFungi"/>
</dbReference>
<dbReference type="GO" id="GO:0006624">
    <property type="term" value="P:vacuolar protein processing"/>
    <property type="evidence" value="ECO:0007669"/>
    <property type="project" value="EnsemblFungi"/>
</dbReference>
<dbReference type="Gene3D" id="2.130.10.10">
    <property type="entry name" value="YVTN repeat-like/Quinoprotein amine dehydrogenase"/>
    <property type="match status" value="1"/>
</dbReference>
<dbReference type="InterPro" id="IPR048720">
    <property type="entry name" value="PROPPIN"/>
</dbReference>
<dbReference type="InterPro" id="IPR015943">
    <property type="entry name" value="WD40/YVTN_repeat-like_dom_sf"/>
</dbReference>
<dbReference type="InterPro" id="IPR036322">
    <property type="entry name" value="WD40_repeat_dom_sf"/>
</dbReference>
<dbReference type="InterPro" id="IPR001680">
    <property type="entry name" value="WD40_rpt"/>
</dbReference>
<dbReference type="PANTHER" id="PTHR11227">
    <property type="entry name" value="WD-REPEAT PROTEIN INTERACTING WITH PHOSPHOINOSIDES WIPI -RELATED"/>
    <property type="match status" value="1"/>
</dbReference>
<dbReference type="Pfam" id="PF21032">
    <property type="entry name" value="PROPPIN"/>
    <property type="match status" value="2"/>
</dbReference>
<dbReference type="SMART" id="SM00320">
    <property type="entry name" value="WD40"/>
    <property type="match status" value="2"/>
</dbReference>
<dbReference type="SUPFAM" id="SSF50978">
    <property type="entry name" value="WD40 repeat-like"/>
    <property type="match status" value="1"/>
</dbReference>